<name>LAC12_ORYSJ</name>
<comment type="function">
    <text evidence="1">Lignin degradation and detoxification of lignin-derived products.</text>
</comment>
<comment type="catalytic activity">
    <reaction>
        <text>4 hydroquinone + O2 = 4 benzosemiquinone + 2 H2O</text>
        <dbReference type="Rhea" id="RHEA:11276"/>
        <dbReference type="ChEBI" id="CHEBI:15377"/>
        <dbReference type="ChEBI" id="CHEBI:15379"/>
        <dbReference type="ChEBI" id="CHEBI:17594"/>
        <dbReference type="ChEBI" id="CHEBI:17977"/>
        <dbReference type="EC" id="1.10.3.2"/>
    </reaction>
</comment>
<comment type="cofactor">
    <cofactor evidence="1">
        <name>Cu cation</name>
        <dbReference type="ChEBI" id="CHEBI:23378"/>
    </cofactor>
    <text evidence="1">Binds 4 Cu cations per monomer.</text>
</comment>
<comment type="subcellular location">
    <subcellularLocation>
        <location evidence="3">Secreted</location>
        <location evidence="3">Extracellular space</location>
        <location evidence="3">Apoplast</location>
    </subcellularLocation>
</comment>
<comment type="similarity">
    <text evidence="3">Belongs to the multicopper oxidase family.</text>
</comment>
<comment type="sequence caution" evidence="3">
    <conflict type="erroneous gene model prediction">
        <sequence resource="EMBL-CDS" id="AAU44018"/>
    </conflict>
</comment>
<comment type="sequence caution" evidence="3">
    <conflict type="erroneous gene model prediction">
        <sequence resource="EMBL-CDS" id="BAF17660"/>
    </conflict>
</comment>
<comment type="sequence caution" evidence="3">
    <conflict type="erroneous gene model prediction">
        <sequence resource="EMBL-CDS" id="EEE63977"/>
    </conflict>
</comment>
<accession>B9FJH4</accession>
<accession>A0A0P0WND9</accession>
<accession>Q0DHL2</accession>
<accession>Q0DHL3</accession>
<accession>Q65XF7</accession>
<sequence>MAAASSVLRCCLLVAALMTLSAMGAEAITRQYLFDVQTTSVTRLCSTKSIVTVNGQYPGPTLFAREGDHVEVTVVNHSPYNMSIHWHGIRQLLSGWADGPSYITQCPIQPGGSYVYRFTITGQRGTLWWHAHISWLRATVHGPMVILPPAGVGYPFPAPHEEVPIMFGEWWNNDTEAVISQALQTGGGPNISDAYTLNGLPGPLYNCSAQDTFKLKVKPGKTYMLRLINAALNDELFFSIANHTLTVVDVDALYVKPFTVDTLIIAPGQTSNVLLTAKPTYPGASYYMLARPYTTTQGTFDNTTVAGVLEYDDPCPTTAAGKIVPIFSPTLPQINDTNAVSNFTAKLRSLASAGYPAAVPQQVDHRFFFTVGLGTHPCAVNGTCQGPNGSRFAASINNVSFVLPATALLQSHFAGKSKGVYASNFPYYPLNPFNYTGTPPNNTNVMNGTKVLVLPYGANVELVMQDTSILGAESHPLHLHGFNFFVVGQGFGNFDPINDPAKFNLYDPVERNTVGVPAGGWVAIRFHADNPGVWFMHCHLEVHMSWGLKMAWLVLDGSRPDQKLPPPPLDLPKC</sequence>
<keyword id="KW-0052">Apoplast</keyword>
<keyword id="KW-0186">Copper</keyword>
<keyword id="KW-0325">Glycoprotein</keyword>
<keyword id="KW-0439">Lignin degradation</keyword>
<keyword id="KW-0479">Metal-binding</keyword>
<keyword id="KW-0560">Oxidoreductase</keyword>
<keyword id="KW-1185">Reference proteome</keyword>
<keyword id="KW-0677">Repeat</keyword>
<keyword id="KW-0964">Secreted</keyword>
<keyword id="KW-0732">Signal</keyword>
<proteinExistence type="inferred from homology"/>
<gene>
    <name type="primary">LAC12</name>
    <name type="ordered locus">Os05g0458500</name>
    <name type="ordered locus">LOC_Os05g38410</name>
    <name type="ORF">OJ1362_D02.9</name>
    <name type="ORF">OsJ_018046</name>
</gene>
<dbReference type="EC" id="1.10.3.2"/>
<dbReference type="EMBL" id="AC105770">
    <property type="protein sequence ID" value="AAU44018.1"/>
    <property type="status" value="ALT_SEQ"/>
    <property type="molecule type" value="Genomic_DNA"/>
</dbReference>
<dbReference type="EMBL" id="AP008211">
    <property type="protein sequence ID" value="BAF17660.1"/>
    <property type="status" value="ALT_SEQ"/>
    <property type="molecule type" value="Genomic_DNA"/>
</dbReference>
<dbReference type="EMBL" id="AP014961">
    <property type="protein sequence ID" value="BAS94387.1"/>
    <property type="molecule type" value="Genomic_DNA"/>
</dbReference>
<dbReference type="EMBL" id="CM000142">
    <property type="protein sequence ID" value="EEE63977.1"/>
    <property type="status" value="ALT_SEQ"/>
    <property type="molecule type" value="Genomic_DNA"/>
</dbReference>
<dbReference type="SMR" id="B9FJH4"/>
<dbReference type="FunCoup" id="B9FJH4">
    <property type="interactions" value="36"/>
</dbReference>
<dbReference type="STRING" id="39947.B9FJH4"/>
<dbReference type="GlyCosmos" id="B9FJH4">
    <property type="glycosylation" value="14 sites, No reported glycans"/>
</dbReference>
<dbReference type="PaxDb" id="39947-B9FJH4"/>
<dbReference type="EnsemblPlants" id="Os05t0458500-00">
    <property type="protein sequence ID" value="Os05t0458500-00"/>
    <property type="gene ID" value="Os05g0458500"/>
</dbReference>
<dbReference type="EnsemblPlants" id="Os05t0458600-01">
    <property type="protein sequence ID" value="Os05t0458600-01"/>
    <property type="gene ID" value="Os05g0458600"/>
</dbReference>
<dbReference type="GeneID" id="4339003"/>
<dbReference type="Gramene" id="Os05t0458500-00">
    <property type="protein sequence ID" value="Os05t0458500-00"/>
    <property type="gene ID" value="Os05g0458500"/>
</dbReference>
<dbReference type="Gramene" id="Os05t0458600-01">
    <property type="protein sequence ID" value="Os05t0458600-01"/>
    <property type="gene ID" value="Os05g0458600"/>
</dbReference>
<dbReference type="KEGG" id="dosa:Os05g0458500"/>
<dbReference type="KEGG" id="osa:4339003"/>
<dbReference type="KEGG" id="osa:4339004"/>
<dbReference type="eggNOG" id="KOG1263">
    <property type="taxonomic scope" value="Eukaryota"/>
</dbReference>
<dbReference type="InParanoid" id="B9FJH4"/>
<dbReference type="OMA" id="DMGCMPP"/>
<dbReference type="OrthoDB" id="2121828at2759"/>
<dbReference type="Proteomes" id="UP000000763">
    <property type="component" value="Chromosome 5"/>
</dbReference>
<dbReference type="Proteomes" id="UP000007752">
    <property type="component" value="Chromosome 5"/>
</dbReference>
<dbReference type="Proteomes" id="UP000059680">
    <property type="component" value="Chromosome 5"/>
</dbReference>
<dbReference type="ExpressionAtlas" id="B9FJH4">
    <property type="expression patterns" value="baseline and differential"/>
</dbReference>
<dbReference type="GO" id="GO:0048046">
    <property type="term" value="C:apoplast"/>
    <property type="evidence" value="ECO:0007669"/>
    <property type="project" value="UniProtKB-SubCell"/>
</dbReference>
<dbReference type="GO" id="GO:0005507">
    <property type="term" value="F:copper ion binding"/>
    <property type="evidence" value="ECO:0007669"/>
    <property type="project" value="InterPro"/>
</dbReference>
<dbReference type="GO" id="GO:0052716">
    <property type="term" value="F:hydroquinone:oxygen oxidoreductase activity"/>
    <property type="evidence" value="ECO:0007669"/>
    <property type="project" value="UniProtKB-EC"/>
</dbReference>
<dbReference type="GO" id="GO:0016491">
    <property type="term" value="F:oxidoreductase activity"/>
    <property type="evidence" value="ECO:0000318"/>
    <property type="project" value="GO_Central"/>
</dbReference>
<dbReference type="GO" id="GO:0046274">
    <property type="term" value="P:lignin catabolic process"/>
    <property type="evidence" value="ECO:0007669"/>
    <property type="project" value="UniProtKB-KW"/>
</dbReference>
<dbReference type="CDD" id="cd13849">
    <property type="entry name" value="CuRO_1_LCC_plant"/>
    <property type="match status" value="1"/>
</dbReference>
<dbReference type="CDD" id="cd13875">
    <property type="entry name" value="CuRO_2_LCC_plant"/>
    <property type="match status" value="1"/>
</dbReference>
<dbReference type="CDD" id="cd13897">
    <property type="entry name" value="CuRO_3_LCC_plant"/>
    <property type="match status" value="1"/>
</dbReference>
<dbReference type="FunFam" id="2.60.40.420:FF:000049">
    <property type="entry name" value="Laccase"/>
    <property type="match status" value="1"/>
</dbReference>
<dbReference type="FunFam" id="2.60.40.420:FF:000062">
    <property type="entry name" value="Laccase"/>
    <property type="match status" value="1"/>
</dbReference>
<dbReference type="Gene3D" id="2.60.40.420">
    <property type="entry name" value="Cupredoxins - blue copper proteins"/>
    <property type="match status" value="3"/>
</dbReference>
<dbReference type="InterPro" id="IPR011707">
    <property type="entry name" value="Cu-oxidase-like_N"/>
</dbReference>
<dbReference type="InterPro" id="IPR001117">
    <property type="entry name" value="Cu-oxidase_2nd"/>
</dbReference>
<dbReference type="InterPro" id="IPR011706">
    <property type="entry name" value="Cu-oxidase_C"/>
</dbReference>
<dbReference type="InterPro" id="IPR045087">
    <property type="entry name" value="Cu-oxidase_fam"/>
</dbReference>
<dbReference type="InterPro" id="IPR033138">
    <property type="entry name" value="Cu_oxidase_CS"/>
</dbReference>
<dbReference type="InterPro" id="IPR002355">
    <property type="entry name" value="Cu_oxidase_Cu_BS"/>
</dbReference>
<dbReference type="InterPro" id="IPR008972">
    <property type="entry name" value="Cupredoxin"/>
</dbReference>
<dbReference type="InterPro" id="IPR034288">
    <property type="entry name" value="CuRO_1_LCC"/>
</dbReference>
<dbReference type="InterPro" id="IPR034285">
    <property type="entry name" value="CuRO_2_LCC"/>
</dbReference>
<dbReference type="InterPro" id="IPR034289">
    <property type="entry name" value="CuRO_3_LCC"/>
</dbReference>
<dbReference type="InterPro" id="IPR017761">
    <property type="entry name" value="Laccase"/>
</dbReference>
<dbReference type="NCBIfam" id="TIGR03389">
    <property type="entry name" value="laccase"/>
    <property type="match status" value="1"/>
</dbReference>
<dbReference type="PANTHER" id="PTHR11709:SF383">
    <property type="entry name" value="LACCASE-12"/>
    <property type="match status" value="1"/>
</dbReference>
<dbReference type="PANTHER" id="PTHR11709">
    <property type="entry name" value="MULTI-COPPER OXIDASE"/>
    <property type="match status" value="1"/>
</dbReference>
<dbReference type="Pfam" id="PF00394">
    <property type="entry name" value="Cu-oxidase"/>
    <property type="match status" value="1"/>
</dbReference>
<dbReference type="Pfam" id="PF07731">
    <property type="entry name" value="Cu-oxidase_2"/>
    <property type="match status" value="1"/>
</dbReference>
<dbReference type="Pfam" id="PF07732">
    <property type="entry name" value="Cu-oxidase_3"/>
    <property type="match status" value="1"/>
</dbReference>
<dbReference type="SUPFAM" id="SSF49503">
    <property type="entry name" value="Cupredoxins"/>
    <property type="match status" value="3"/>
</dbReference>
<dbReference type="PROSITE" id="PS00079">
    <property type="entry name" value="MULTICOPPER_OXIDASE1"/>
    <property type="match status" value="1"/>
</dbReference>
<dbReference type="PROSITE" id="PS00080">
    <property type="entry name" value="MULTICOPPER_OXIDASE2"/>
    <property type="match status" value="1"/>
</dbReference>
<organism>
    <name type="scientific">Oryza sativa subsp. japonica</name>
    <name type="common">Rice</name>
    <dbReference type="NCBI Taxonomy" id="39947"/>
    <lineage>
        <taxon>Eukaryota</taxon>
        <taxon>Viridiplantae</taxon>
        <taxon>Streptophyta</taxon>
        <taxon>Embryophyta</taxon>
        <taxon>Tracheophyta</taxon>
        <taxon>Spermatophyta</taxon>
        <taxon>Magnoliopsida</taxon>
        <taxon>Liliopsida</taxon>
        <taxon>Poales</taxon>
        <taxon>Poaceae</taxon>
        <taxon>BOP clade</taxon>
        <taxon>Oryzoideae</taxon>
        <taxon>Oryzeae</taxon>
        <taxon>Oryzinae</taxon>
        <taxon>Oryza</taxon>
        <taxon>Oryza sativa</taxon>
    </lineage>
</organism>
<feature type="signal peptide" evidence="2">
    <location>
        <begin position="1"/>
        <end position="27"/>
    </location>
</feature>
<feature type="chain" id="PRO_0000291897" description="Laccase-12">
    <location>
        <begin position="28"/>
        <end position="574"/>
    </location>
</feature>
<feature type="domain" description="Plastocyanin-like 1">
    <location>
        <begin position="35"/>
        <end position="151"/>
    </location>
</feature>
<feature type="domain" description="Plastocyanin-like 2">
    <location>
        <begin position="161"/>
        <end position="314"/>
    </location>
</feature>
<feature type="domain" description="Plastocyanin-like 3">
    <location>
        <begin position="424"/>
        <end position="558"/>
    </location>
</feature>
<feature type="binding site" evidence="1">
    <location>
        <position position="85"/>
    </location>
    <ligand>
        <name>Cu cation</name>
        <dbReference type="ChEBI" id="CHEBI:23378"/>
        <label>1</label>
    </ligand>
</feature>
<feature type="binding site" evidence="1">
    <location>
        <position position="87"/>
    </location>
    <ligand>
        <name>Cu cation</name>
        <dbReference type="ChEBI" id="CHEBI:23378"/>
        <label>2</label>
    </ligand>
</feature>
<feature type="binding site" evidence="1">
    <location>
        <position position="130"/>
    </location>
    <ligand>
        <name>Cu cation</name>
        <dbReference type="ChEBI" id="CHEBI:23378"/>
        <label>2</label>
    </ligand>
</feature>
<feature type="binding site" evidence="1">
    <location>
        <position position="132"/>
    </location>
    <ligand>
        <name>Cu cation</name>
        <dbReference type="ChEBI" id="CHEBI:23378"/>
        <label>3</label>
    </ligand>
</feature>
<feature type="binding site" evidence="1">
    <location>
        <position position="475"/>
    </location>
    <ligand>
        <name>Cu cation</name>
        <dbReference type="ChEBI" id="CHEBI:23378"/>
        <label>4</label>
    </ligand>
</feature>
<feature type="binding site" evidence="1">
    <location>
        <position position="478"/>
    </location>
    <ligand>
        <name>Cu cation</name>
        <dbReference type="ChEBI" id="CHEBI:23378"/>
        <label>1</label>
    </ligand>
</feature>
<feature type="binding site" evidence="1">
    <location>
        <position position="480"/>
    </location>
    <ligand>
        <name>Cu cation</name>
        <dbReference type="ChEBI" id="CHEBI:23378"/>
        <label>3</label>
    </ligand>
</feature>
<feature type="binding site" evidence="1">
    <location>
        <position position="537"/>
    </location>
    <ligand>
        <name>Cu cation</name>
        <dbReference type="ChEBI" id="CHEBI:23378"/>
        <label>3</label>
    </ligand>
</feature>
<feature type="binding site" evidence="1">
    <location>
        <position position="538"/>
    </location>
    <ligand>
        <name>Cu cation</name>
        <dbReference type="ChEBI" id="CHEBI:23378"/>
        <label>4</label>
    </ligand>
</feature>
<feature type="binding site" evidence="1">
    <location>
        <position position="539"/>
    </location>
    <ligand>
        <name>Cu cation</name>
        <dbReference type="ChEBI" id="CHEBI:23378"/>
        <label>2</label>
    </ligand>
</feature>
<feature type="binding site" evidence="1">
    <location>
        <position position="543"/>
    </location>
    <ligand>
        <name>Cu cation</name>
        <dbReference type="ChEBI" id="CHEBI:23378"/>
        <label>4</label>
    </ligand>
</feature>
<feature type="glycosylation site" description="N-linked (GlcNAc...) asparagine" evidence="2">
    <location>
        <position position="81"/>
    </location>
</feature>
<feature type="glycosylation site" description="N-linked (GlcNAc...) asparagine" evidence="2">
    <location>
        <position position="173"/>
    </location>
</feature>
<feature type="glycosylation site" description="N-linked (GlcNAc...) asparagine" evidence="2">
    <location>
        <position position="190"/>
    </location>
</feature>
<feature type="glycosylation site" description="N-linked (GlcNAc...) asparagine" evidence="2">
    <location>
        <position position="206"/>
    </location>
</feature>
<feature type="glycosylation site" description="N-linked (GlcNAc...) asparagine" evidence="2">
    <location>
        <position position="242"/>
    </location>
</feature>
<feature type="glycosylation site" description="N-linked (GlcNAc...) asparagine" evidence="2">
    <location>
        <position position="302"/>
    </location>
</feature>
<feature type="glycosylation site" description="N-linked (GlcNAc...) asparagine" evidence="2">
    <location>
        <position position="335"/>
    </location>
</feature>
<feature type="glycosylation site" description="N-linked (GlcNAc...) asparagine" evidence="2">
    <location>
        <position position="342"/>
    </location>
</feature>
<feature type="glycosylation site" description="N-linked (GlcNAc...) asparagine" evidence="2">
    <location>
        <position position="381"/>
    </location>
</feature>
<feature type="glycosylation site" description="N-linked (GlcNAc...) asparagine" evidence="2">
    <location>
        <position position="388"/>
    </location>
</feature>
<feature type="glycosylation site" description="N-linked (GlcNAc...) asparagine" evidence="2">
    <location>
        <position position="398"/>
    </location>
</feature>
<feature type="glycosylation site" description="N-linked (GlcNAc...) asparagine" evidence="2">
    <location>
        <position position="434"/>
    </location>
</feature>
<feature type="glycosylation site" description="N-linked (GlcNAc...) asparagine" evidence="2">
    <location>
        <position position="441"/>
    </location>
</feature>
<feature type="glycosylation site" description="N-linked (GlcNAc...) asparagine" evidence="2">
    <location>
        <position position="447"/>
    </location>
</feature>
<evidence type="ECO:0000250" key="1"/>
<evidence type="ECO:0000255" key="2"/>
<evidence type="ECO:0000305" key="3"/>
<protein>
    <recommendedName>
        <fullName>Laccase-12</fullName>
        <ecNumber>1.10.3.2</ecNumber>
    </recommendedName>
    <alternativeName>
        <fullName>Benzenediol:oxygen oxidoreductase 12</fullName>
    </alternativeName>
    <alternativeName>
        <fullName>Diphenol oxidase 12</fullName>
    </alternativeName>
    <alternativeName>
        <fullName>Urishiol oxidase 12</fullName>
    </alternativeName>
</protein>
<reference key="1">
    <citation type="journal article" date="2005" name="Mol. Genet. Genomics">
        <title>A fine physical map of the rice chromosome 5.</title>
        <authorList>
            <person name="Cheng C.-H."/>
            <person name="Chung M.C."/>
            <person name="Liu S.-M."/>
            <person name="Chen S.-K."/>
            <person name="Kao F.Y."/>
            <person name="Lin S.-J."/>
            <person name="Hsiao S.-H."/>
            <person name="Tseng I.C."/>
            <person name="Hsing Y.-I.C."/>
            <person name="Wu H.-P."/>
            <person name="Chen C.-S."/>
            <person name="Shaw J.-F."/>
            <person name="Wu J."/>
            <person name="Matsumoto T."/>
            <person name="Sasaki T."/>
            <person name="Chen H.-C."/>
            <person name="Chow T.-Y."/>
        </authorList>
    </citation>
    <scope>NUCLEOTIDE SEQUENCE [LARGE SCALE GENOMIC DNA] (OS05G0458500 AND OS05G0458600)</scope>
    <source>
        <strain>cv. Nipponbare</strain>
    </source>
</reference>
<reference key="2">
    <citation type="journal article" date="2005" name="Nature">
        <title>The map-based sequence of the rice genome.</title>
        <authorList>
            <consortium name="International rice genome sequencing project (IRGSP)"/>
        </authorList>
    </citation>
    <scope>NUCLEOTIDE SEQUENCE [LARGE SCALE GENOMIC DNA] (OS05G0458500 AND OS05G0458600)</scope>
    <source>
        <strain>cv. Nipponbare</strain>
    </source>
</reference>
<reference key="3">
    <citation type="journal article" date="2008" name="Nucleic Acids Res.">
        <title>The rice annotation project database (RAP-DB): 2008 update.</title>
        <authorList>
            <consortium name="The rice annotation project (RAP)"/>
        </authorList>
    </citation>
    <scope>GENOME REANNOTATION</scope>
    <source>
        <strain>cv. Nipponbare</strain>
    </source>
</reference>
<reference key="4">
    <citation type="journal article" date="2013" name="Rice">
        <title>Improvement of the Oryza sativa Nipponbare reference genome using next generation sequence and optical map data.</title>
        <authorList>
            <person name="Kawahara Y."/>
            <person name="de la Bastide M."/>
            <person name="Hamilton J.P."/>
            <person name="Kanamori H."/>
            <person name="McCombie W.R."/>
            <person name="Ouyang S."/>
            <person name="Schwartz D.C."/>
            <person name="Tanaka T."/>
            <person name="Wu J."/>
            <person name="Zhou S."/>
            <person name="Childs K.L."/>
            <person name="Davidson R.M."/>
            <person name="Lin H."/>
            <person name="Quesada-Ocampo L."/>
            <person name="Vaillancourt B."/>
            <person name="Sakai H."/>
            <person name="Lee S.S."/>
            <person name="Kim J."/>
            <person name="Numa H."/>
            <person name="Itoh T."/>
            <person name="Buell C.R."/>
            <person name="Matsumoto T."/>
        </authorList>
    </citation>
    <scope>GENOME REANNOTATION</scope>
    <source>
        <strain>cv. Nipponbare</strain>
    </source>
</reference>
<reference key="5">
    <citation type="journal article" date="2005" name="PLoS Biol.">
        <title>The genomes of Oryza sativa: a history of duplications.</title>
        <authorList>
            <person name="Yu J."/>
            <person name="Wang J."/>
            <person name="Lin W."/>
            <person name="Li S."/>
            <person name="Li H."/>
            <person name="Zhou J."/>
            <person name="Ni P."/>
            <person name="Dong W."/>
            <person name="Hu S."/>
            <person name="Zeng C."/>
            <person name="Zhang J."/>
            <person name="Zhang Y."/>
            <person name="Li R."/>
            <person name="Xu Z."/>
            <person name="Li S."/>
            <person name="Li X."/>
            <person name="Zheng H."/>
            <person name="Cong L."/>
            <person name="Lin L."/>
            <person name="Yin J."/>
            <person name="Geng J."/>
            <person name="Li G."/>
            <person name="Shi J."/>
            <person name="Liu J."/>
            <person name="Lv H."/>
            <person name="Li J."/>
            <person name="Wang J."/>
            <person name="Deng Y."/>
            <person name="Ran L."/>
            <person name="Shi X."/>
            <person name="Wang X."/>
            <person name="Wu Q."/>
            <person name="Li C."/>
            <person name="Ren X."/>
            <person name="Wang J."/>
            <person name="Wang X."/>
            <person name="Li D."/>
            <person name="Liu D."/>
            <person name="Zhang X."/>
            <person name="Ji Z."/>
            <person name="Zhao W."/>
            <person name="Sun Y."/>
            <person name="Zhang Z."/>
            <person name="Bao J."/>
            <person name="Han Y."/>
            <person name="Dong L."/>
            <person name="Ji J."/>
            <person name="Chen P."/>
            <person name="Wu S."/>
            <person name="Liu J."/>
            <person name="Xiao Y."/>
            <person name="Bu D."/>
            <person name="Tan J."/>
            <person name="Yang L."/>
            <person name="Ye C."/>
            <person name="Zhang J."/>
            <person name="Xu J."/>
            <person name="Zhou Y."/>
            <person name="Yu Y."/>
            <person name="Zhang B."/>
            <person name="Zhuang S."/>
            <person name="Wei H."/>
            <person name="Liu B."/>
            <person name="Lei M."/>
            <person name="Yu H."/>
            <person name="Li Y."/>
            <person name="Xu H."/>
            <person name="Wei S."/>
            <person name="He X."/>
            <person name="Fang L."/>
            <person name="Zhang Z."/>
            <person name="Zhang Y."/>
            <person name="Huang X."/>
            <person name="Su Z."/>
            <person name="Tong W."/>
            <person name="Li J."/>
            <person name="Tong Z."/>
            <person name="Li S."/>
            <person name="Ye J."/>
            <person name="Wang L."/>
            <person name="Fang L."/>
            <person name="Lei T."/>
            <person name="Chen C.-S."/>
            <person name="Chen H.-C."/>
            <person name="Xu Z."/>
            <person name="Li H."/>
            <person name="Huang H."/>
            <person name="Zhang F."/>
            <person name="Xu H."/>
            <person name="Li N."/>
            <person name="Zhao C."/>
            <person name="Li S."/>
            <person name="Dong L."/>
            <person name="Huang Y."/>
            <person name="Li L."/>
            <person name="Xi Y."/>
            <person name="Qi Q."/>
            <person name="Li W."/>
            <person name="Zhang B."/>
            <person name="Hu W."/>
            <person name="Zhang Y."/>
            <person name="Tian X."/>
            <person name="Jiao Y."/>
            <person name="Liang X."/>
            <person name="Jin J."/>
            <person name="Gao L."/>
            <person name="Zheng W."/>
            <person name="Hao B."/>
            <person name="Liu S.-M."/>
            <person name="Wang W."/>
            <person name="Yuan L."/>
            <person name="Cao M."/>
            <person name="McDermott J."/>
            <person name="Samudrala R."/>
            <person name="Wang J."/>
            <person name="Wong G.K.-S."/>
            <person name="Yang H."/>
        </authorList>
    </citation>
    <scope>NUCLEOTIDE SEQUENCE [LARGE SCALE GENOMIC DNA] (OS05G0458500 AND OS05G0458600)</scope>
    <source>
        <strain>cv. Nipponbare</strain>
    </source>
</reference>